<feature type="chain" id="PRO_0000417329" description="Protein-tyrosine-phosphatase PTP1">
    <location>
        <begin position="1"/>
        <end position="340"/>
    </location>
</feature>
<feature type="domain" description="Tyrosine-protein phosphatase" evidence="2">
    <location>
        <begin position="58"/>
        <end position="326"/>
    </location>
</feature>
<feature type="active site" description="Phosphocysteine intermediate">
    <location>
        <position position="265"/>
    </location>
</feature>
<feature type="binding site" evidence="9">
    <location>
        <position position="234"/>
    </location>
    <ligand>
        <name>substrate</name>
    </ligand>
</feature>
<feature type="binding site" evidence="1">
    <location>
        <begin position="265"/>
        <end position="271"/>
    </location>
    <ligand>
        <name>substrate</name>
    </ligand>
</feature>
<feature type="binding site" evidence="1">
    <location>
        <position position="311"/>
    </location>
    <ligand>
        <name>substrate</name>
    </ligand>
</feature>
<feature type="mutagenesis site" description="Disrupt binding to MPK6; when associated with D-8." evidence="7">
    <original>S</original>
    <variation>D</variation>
    <location>
        <position position="7"/>
    </location>
</feature>
<feature type="mutagenesis site" description="Disrupt binding to MPK6; when associated with D-7." evidence="7">
    <original>S</original>
    <variation>D</variation>
    <location>
        <position position="8"/>
    </location>
</feature>
<feature type="mutagenesis site" description="Loss of activity." evidence="8">
    <original>D</original>
    <variation>A</variation>
    <location>
        <position position="234"/>
    </location>
</feature>
<feature type="mutagenesis site" description="Loss of activity." evidence="8">
    <original>C</original>
    <variation>S</variation>
    <location>
        <position position="265"/>
    </location>
</feature>
<feature type="sequence conflict" description="In Ref. 1; AAC68859." evidence="9" ref="1">
    <original>D</original>
    <variation>A</variation>
    <location>
        <position position="147"/>
    </location>
</feature>
<feature type="helix" evidence="10">
    <location>
        <begin position="35"/>
        <end position="52"/>
    </location>
</feature>
<feature type="helix" evidence="10">
    <location>
        <begin position="55"/>
        <end position="67"/>
    </location>
</feature>
<feature type="helix" evidence="10">
    <location>
        <begin position="72"/>
        <end position="74"/>
    </location>
</feature>
<feature type="helix" evidence="10">
    <location>
        <begin position="75"/>
        <end position="78"/>
    </location>
</feature>
<feature type="helix" evidence="10">
    <location>
        <begin position="80"/>
        <end position="83"/>
    </location>
</feature>
<feature type="turn" evidence="10">
    <location>
        <begin position="85"/>
        <end position="87"/>
    </location>
</feature>
<feature type="helix" evidence="10">
    <location>
        <begin position="88"/>
        <end position="90"/>
    </location>
</feature>
<feature type="turn" evidence="10">
    <location>
        <begin position="100"/>
        <end position="102"/>
    </location>
</feature>
<feature type="strand" evidence="10">
    <location>
        <begin position="103"/>
        <end position="105"/>
    </location>
</feature>
<feature type="helix" evidence="10">
    <location>
        <begin position="112"/>
        <end position="114"/>
    </location>
</feature>
<feature type="strand" evidence="10">
    <location>
        <begin position="117"/>
        <end position="123"/>
    </location>
</feature>
<feature type="strand" evidence="10">
    <location>
        <begin position="134"/>
        <end position="137"/>
    </location>
</feature>
<feature type="helix" evidence="10">
    <location>
        <begin position="142"/>
        <end position="144"/>
    </location>
</feature>
<feature type="helix" evidence="10">
    <location>
        <begin position="145"/>
        <end position="154"/>
    </location>
</feature>
<feature type="strand" evidence="10">
    <location>
        <begin position="159"/>
        <end position="162"/>
    </location>
</feature>
<feature type="strand" evidence="10">
    <location>
        <begin position="182"/>
        <end position="184"/>
    </location>
</feature>
<feature type="strand" evidence="10">
    <location>
        <begin position="186"/>
        <end position="188"/>
    </location>
</feature>
<feature type="strand" evidence="10">
    <location>
        <begin position="191"/>
        <end position="200"/>
    </location>
</feature>
<feature type="strand" evidence="10">
    <location>
        <begin position="206"/>
        <end position="216"/>
    </location>
</feature>
<feature type="strand" evidence="10">
    <location>
        <begin position="222"/>
        <end position="228"/>
    </location>
</feature>
<feature type="strand" evidence="10">
    <location>
        <begin position="239"/>
        <end position="241"/>
    </location>
</feature>
<feature type="helix" evidence="10">
    <location>
        <begin position="242"/>
        <end position="251"/>
    </location>
</feature>
<feature type="helix" evidence="10">
    <location>
        <begin position="256"/>
        <end position="258"/>
    </location>
</feature>
<feature type="strand" evidence="10">
    <location>
        <begin position="261"/>
        <end position="269"/>
    </location>
</feature>
<feature type="helix" evidence="10">
    <location>
        <begin position="270"/>
        <end position="287"/>
    </location>
</feature>
<feature type="helix" evidence="10">
    <location>
        <begin position="290"/>
        <end position="293"/>
    </location>
</feature>
<feature type="helix" evidence="10">
    <location>
        <begin position="295"/>
        <end position="305"/>
    </location>
</feature>
<feature type="helix" evidence="10">
    <location>
        <begin position="313"/>
        <end position="331"/>
    </location>
</feature>
<accession>O82656</accession>
<accession>O65190</accession>
<keyword id="KW-0002">3D-structure</keyword>
<keyword id="KW-0025">Alternative splicing</keyword>
<keyword id="KW-0963">Cytoplasm</keyword>
<keyword id="KW-0378">Hydrolase</keyword>
<keyword id="KW-0539">Nucleus</keyword>
<keyword id="KW-0597">Phosphoprotein</keyword>
<keyword id="KW-0611">Plant defense</keyword>
<keyword id="KW-0904">Protein phosphatase</keyword>
<keyword id="KW-1185">Reference proteome</keyword>
<gene>
    <name type="primary">PTP1</name>
    <name type="ordered locus">At1g71860</name>
    <name type="ORF">F14O23.24</name>
</gene>
<sequence>MATGKTSSAANLFTGSTRFDLSSADSPPSKLSLSSDQLNHCHQALGVFRGKIQNPDSIAHEFTGLQANRMWPSELLLNSTVAMNSVNVEKNRYSDVVPFDKNRIVLNPCKDSSAKGYVNASLIKTSESESISQFIATQGPLPHTMEDFWEMVIQQHCPIIVMLTRLVDNNRTVKCGDYFQDEDGPREFGNISLTTKWIKTTDTSLMLRNLEVNYKETEDQPMSVLHIQYPEWPDHGVPKDTVAVREILKRLYQVPPSLGPIIVHCSAGIGRTGTYCAIHNTIQRILAGDMSALDLAKTVALFRKQRIGMVQTMDQYFFCYNAIVDELEDLTAGTNAGTSS</sequence>
<name>PTP1_ARATH</name>
<comment type="function">
    <text evidence="4 5 6 8">Protein-tyrosine-phosphatase that dephosphorylates and probably inhibits MPK6 in non-oxidative stress conditions. In association with MKP1, represses salicylic acid (SA) and camalexin biosynthesis, thus modulating defense response. May also repress MPK3. Dephosphorylates and inactivates MPK4 in vitro.</text>
</comment>
<comment type="catalytic activity">
    <reaction evidence="3">
        <text>O-phospho-L-tyrosyl-[protein] + H2O = L-tyrosyl-[protein] + phosphate</text>
        <dbReference type="Rhea" id="RHEA:10684"/>
        <dbReference type="Rhea" id="RHEA-COMP:10136"/>
        <dbReference type="Rhea" id="RHEA-COMP:20101"/>
        <dbReference type="ChEBI" id="CHEBI:15377"/>
        <dbReference type="ChEBI" id="CHEBI:43474"/>
        <dbReference type="ChEBI" id="CHEBI:46858"/>
        <dbReference type="ChEBI" id="CHEBI:61978"/>
        <dbReference type="EC" id="3.1.3.48"/>
    </reaction>
</comment>
<comment type="activity regulation">
    <text evidence="5">Inhibited by hydrogen peroxide.</text>
</comment>
<comment type="subunit">
    <text evidence="6 7">Interacts with MPK6 (PubMed:19789277). Interacts with KIN10 (PubMed:27029354).</text>
</comment>
<comment type="subcellular location">
    <subcellularLocation>
        <location evidence="6">Cytoplasm</location>
        <location evidence="6">Cytosol</location>
    </subcellularLocation>
    <subcellularLocation>
        <location evidence="6">Nucleus</location>
    </subcellularLocation>
</comment>
<comment type="alternative products">
    <event type="alternative splicing"/>
    <isoform>
        <id>O82656-1</id>
        <name>1</name>
        <sequence type="displayed"/>
    </isoform>
    <text>A number of isoforms are produced. According to EST sequences.</text>
</comment>
<comment type="tissue specificity">
    <text evidence="8">Expressed in roots, stems and flowers, and at low levels in leaves.</text>
</comment>
<comment type="induction">
    <text evidence="8">By salt treatment. Down-regulated by cold.</text>
</comment>
<comment type="PTM">
    <text evidence="7">Phosphorylated by KIN10.</text>
</comment>
<comment type="disruption phenotype">
    <text evidence="6">No visible phenotype under normal growth conditions.</text>
</comment>
<protein>
    <recommendedName>
        <fullName>Protein-tyrosine-phosphatase PTP1</fullName>
        <ecNumber>3.1.3.48</ecNumber>
    </recommendedName>
    <alternativeName>
        <fullName>Protein tyrosine phosphatase 1</fullName>
        <shortName>AtPTP1</shortName>
    </alternativeName>
</protein>
<dbReference type="EC" id="3.1.3.48"/>
<dbReference type="EMBL" id="AF055635">
    <property type="protein sequence ID" value="AAC68859.1"/>
    <property type="molecule type" value="mRNA"/>
</dbReference>
<dbReference type="EMBL" id="AJ006309">
    <property type="protein sequence ID" value="CAA06978.1"/>
    <property type="molecule type" value="Genomic_DNA"/>
</dbReference>
<dbReference type="EMBL" id="AC012654">
    <property type="protein sequence ID" value="AAF43239.1"/>
    <property type="molecule type" value="Genomic_DNA"/>
</dbReference>
<dbReference type="EMBL" id="CP002684">
    <property type="protein sequence ID" value="AEE35242.1"/>
    <property type="molecule type" value="Genomic_DNA"/>
</dbReference>
<dbReference type="EMBL" id="CP002684">
    <property type="protein sequence ID" value="AEE35243.1"/>
    <property type="molecule type" value="Genomic_DNA"/>
</dbReference>
<dbReference type="EMBL" id="AY070403">
    <property type="protein sequence ID" value="AAL49899.1"/>
    <property type="molecule type" value="mRNA"/>
</dbReference>
<dbReference type="EMBL" id="AY117240">
    <property type="protein sequence ID" value="AAM51315.1"/>
    <property type="molecule type" value="mRNA"/>
</dbReference>
<dbReference type="PIR" id="C96741">
    <property type="entry name" value="C96741"/>
</dbReference>
<dbReference type="PIR" id="T51846">
    <property type="entry name" value="T51846"/>
</dbReference>
<dbReference type="RefSeq" id="NP_001031266.1">
    <molecule id="O82656-1"/>
    <property type="nucleotide sequence ID" value="NM_001036189.1"/>
</dbReference>
<dbReference type="RefSeq" id="NP_177331.1">
    <molecule id="O82656-1"/>
    <property type="nucleotide sequence ID" value="NM_105844.4"/>
</dbReference>
<dbReference type="PDB" id="6KRW">
    <property type="method" value="X-ray"/>
    <property type="resolution" value="1.40 A"/>
    <property type="chains" value="A=29-334"/>
</dbReference>
<dbReference type="PDB" id="6KRX">
    <property type="method" value="X-ray"/>
    <property type="resolution" value="1.70 A"/>
    <property type="chains" value="A=1-340"/>
</dbReference>
<dbReference type="PDBsum" id="6KRW"/>
<dbReference type="PDBsum" id="6KRX"/>
<dbReference type="SMR" id="O82656"/>
<dbReference type="BioGRID" id="28736">
    <property type="interactions" value="4"/>
</dbReference>
<dbReference type="FunCoup" id="O82656">
    <property type="interactions" value="3221"/>
</dbReference>
<dbReference type="IntAct" id="O82656">
    <property type="interactions" value="1"/>
</dbReference>
<dbReference type="MINT" id="O82656"/>
<dbReference type="STRING" id="3702.O82656"/>
<dbReference type="iPTMnet" id="O82656"/>
<dbReference type="PaxDb" id="3702-AT1G71860.1"/>
<dbReference type="ProteomicsDB" id="226435">
    <molecule id="O82656-1"/>
</dbReference>
<dbReference type="EnsemblPlants" id="AT1G71860.1">
    <molecule id="O82656-1"/>
    <property type="protein sequence ID" value="AT1G71860.1"/>
    <property type="gene ID" value="AT1G71860"/>
</dbReference>
<dbReference type="EnsemblPlants" id="AT1G71860.3">
    <molecule id="O82656-1"/>
    <property type="protein sequence ID" value="AT1G71860.3"/>
    <property type="gene ID" value="AT1G71860"/>
</dbReference>
<dbReference type="GeneID" id="843516"/>
<dbReference type="Gramene" id="AT1G71860.1">
    <molecule id="O82656-1"/>
    <property type="protein sequence ID" value="AT1G71860.1"/>
    <property type="gene ID" value="AT1G71860"/>
</dbReference>
<dbReference type="Gramene" id="AT1G71860.3">
    <molecule id="O82656-1"/>
    <property type="protein sequence ID" value="AT1G71860.3"/>
    <property type="gene ID" value="AT1G71860"/>
</dbReference>
<dbReference type="KEGG" id="ath:AT1G71860"/>
<dbReference type="Araport" id="AT1G71860"/>
<dbReference type="TAIR" id="AT1G71860">
    <property type="gene designation" value="PTP1"/>
</dbReference>
<dbReference type="eggNOG" id="KOG0789">
    <property type="taxonomic scope" value="Eukaryota"/>
</dbReference>
<dbReference type="HOGENOM" id="CLU_001645_9_7_1"/>
<dbReference type="InParanoid" id="O82656"/>
<dbReference type="OMA" id="WSIDKAP"/>
<dbReference type="OrthoDB" id="10253954at2759"/>
<dbReference type="PhylomeDB" id="O82656"/>
<dbReference type="CD-CODE" id="4299E36E">
    <property type="entry name" value="Nucleolus"/>
</dbReference>
<dbReference type="PRO" id="PR:O82656"/>
<dbReference type="Proteomes" id="UP000006548">
    <property type="component" value="Chromosome 1"/>
</dbReference>
<dbReference type="ExpressionAtlas" id="O82656">
    <property type="expression patterns" value="baseline and differential"/>
</dbReference>
<dbReference type="GO" id="GO:0005737">
    <property type="term" value="C:cytoplasm"/>
    <property type="evidence" value="ECO:0000314"/>
    <property type="project" value="UniProtKB"/>
</dbReference>
<dbReference type="GO" id="GO:0005634">
    <property type="term" value="C:nucleus"/>
    <property type="evidence" value="ECO:0000314"/>
    <property type="project" value="UniProtKB"/>
</dbReference>
<dbReference type="GO" id="GO:0005886">
    <property type="term" value="C:plasma membrane"/>
    <property type="evidence" value="ECO:0007005"/>
    <property type="project" value="TAIR"/>
</dbReference>
<dbReference type="GO" id="GO:0019900">
    <property type="term" value="F:kinase binding"/>
    <property type="evidence" value="ECO:0000353"/>
    <property type="project" value="UniProtKB"/>
</dbReference>
<dbReference type="GO" id="GO:0033550">
    <property type="term" value="F:MAP kinase tyrosine phosphatase activity"/>
    <property type="evidence" value="ECO:0000314"/>
    <property type="project" value="UniProtKB"/>
</dbReference>
<dbReference type="GO" id="GO:0004725">
    <property type="term" value="F:protein tyrosine phosphatase activity"/>
    <property type="evidence" value="ECO:0000314"/>
    <property type="project" value="TAIR"/>
</dbReference>
<dbReference type="GO" id="GO:0006952">
    <property type="term" value="P:defense response"/>
    <property type="evidence" value="ECO:0007669"/>
    <property type="project" value="UniProtKB-KW"/>
</dbReference>
<dbReference type="GO" id="GO:0035556">
    <property type="term" value="P:intracellular signal transduction"/>
    <property type="evidence" value="ECO:0000304"/>
    <property type="project" value="TAIR"/>
</dbReference>
<dbReference type="GO" id="GO:0031348">
    <property type="term" value="P:negative regulation of defense response"/>
    <property type="evidence" value="ECO:0000316"/>
    <property type="project" value="UniProtKB"/>
</dbReference>
<dbReference type="CDD" id="cd17658">
    <property type="entry name" value="PTPc_plant_PTP1"/>
    <property type="match status" value="1"/>
</dbReference>
<dbReference type="FunFam" id="3.90.190.10:FF:000045">
    <property type="entry name" value="Tyrosine-protein phosphatase non-receptor type 12"/>
    <property type="match status" value="1"/>
</dbReference>
<dbReference type="Gene3D" id="3.90.190.10">
    <property type="entry name" value="Protein tyrosine phosphatase superfamily"/>
    <property type="match status" value="1"/>
</dbReference>
<dbReference type="InterPro" id="IPR029021">
    <property type="entry name" value="Prot-tyrosine_phosphatase-like"/>
</dbReference>
<dbReference type="InterPro" id="IPR050348">
    <property type="entry name" value="Protein-Tyr_Phosphatase"/>
</dbReference>
<dbReference type="InterPro" id="IPR000242">
    <property type="entry name" value="PTP_cat"/>
</dbReference>
<dbReference type="InterPro" id="IPR016130">
    <property type="entry name" value="Tyr_Pase_AS"/>
</dbReference>
<dbReference type="InterPro" id="IPR003595">
    <property type="entry name" value="Tyr_Pase_cat"/>
</dbReference>
<dbReference type="InterPro" id="IPR000387">
    <property type="entry name" value="Tyr_Pase_dom"/>
</dbReference>
<dbReference type="PANTHER" id="PTHR19134">
    <property type="entry name" value="RECEPTOR-TYPE TYROSINE-PROTEIN PHOSPHATASE"/>
    <property type="match status" value="1"/>
</dbReference>
<dbReference type="PANTHER" id="PTHR19134:SF449">
    <property type="entry name" value="TYROSINE-PROTEIN PHOSPHATASE 1"/>
    <property type="match status" value="1"/>
</dbReference>
<dbReference type="Pfam" id="PF00102">
    <property type="entry name" value="Y_phosphatase"/>
    <property type="match status" value="1"/>
</dbReference>
<dbReference type="PRINTS" id="PR00700">
    <property type="entry name" value="PRTYPHPHTASE"/>
</dbReference>
<dbReference type="SMART" id="SM00194">
    <property type="entry name" value="PTPc"/>
    <property type="match status" value="1"/>
</dbReference>
<dbReference type="SMART" id="SM00404">
    <property type="entry name" value="PTPc_motif"/>
    <property type="match status" value="1"/>
</dbReference>
<dbReference type="SUPFAM" id="SSF52799">
    <property type="entry name" value="(Phosphotyrosine protein) phosphatases II"/>
    <property type="match status" value="1"/>
</dbReference>
<dbReference type="PROSITE" id="PS00383">
    <property type="entry name" value="TYR_PHOSPHATASE_1"/>
    <property type="match status" value="1"/>
</dbReference>
<dbReference type="PROSITE" id="PS50056">
    <property type="entry name" value="TYR_PHOSPHATASE_2"/>
    <property type="match status" value="1"/>
</dbReference>
<dbReference type="PROSITE" id="PS50055">
    <property type="entry name" value="TYR_PHOSPHATASE_PTP"/>
    <property type="match status" value="1"/>
</dbReference>
<organism>
    <name type="scientific">Arabidopsis thaliana</name>
    <name type="common">Mouse-ear cress</name>
    <dbReference type="NCBI Taxonomy" id="3702"/>
    <lineage>
        <taxon>Eukaryota</taxon>
        <taxon>Viridiplantae</taxon>
        <taxon>Streptophyta</taxon>
        <taxon>Embryophyta</taxon>
        <taxon>Tracheophyta</taxon>
        <taxon>Spermatophyta</taxon>
        <taxon>Magnoliopsida</taxon>
        <taxon>eudicotyledons</taxon>
        <taxon>Gunneridae</taxon>
        <taxon>Pentapetalae</taxon>
        <taxon>rosids</taxon>
        <taxon>malvids</taxon>
        <taxon>Brassicales</taxon>
        <taxon>Brassicaceae</taxon>
        <taxon>Camelineae</taxon>
        <taxon>Arabidopsis</taxon>
    </lineage>
</organism>
<proteinExistence type="evidence at protein level"/>
<reference key="1">
    <citation type="journal article" date="1998" name="Plant Cell">
        <title>Molecular characterization of a tyrosine-specific protein phosphatase encoded by a stress-responsive gene in Arabidopsis.</title>
        <authorList>
            <person name="Xu Q."/>
            <person name="Fu H.H."/>
            <person name="Gupta R."/>
            <person name="Luan S."/>
        </authorList>
    </citation>
    <scope>NUCLEOTIDE SEQUENCE [MRNA]</scope>
    <scope>FUNCTION</scope>
    <scope>TISSUE SPECIFICITY</scope>
    <scope>INDUCTION</scope>
    <scope>MUTAGENESIS OF ASP-234 AND CYS-265</scope>
</reference>
<reference key="2">
    <citation type="journal article" date="1999" name="Plant Mol. Biol.">
        <title>Higher plant tyrosine-specific protein phosphatases (PTPs) contain novel amino-terminal domains: expression during embryogenesis.</title>
        <authorList>
            <person name="Fordham-Skelton A.P."/>
            <person name="Skipsey M."/>
            <person name="Eveans I.M."/>
            <person name="Edwards R."/>
            <person name="Gatehouse J.A."/>
        </authorList>
    </citation>
    <scope>NUCLEOTIDE SEQUENCE [GENOMIC DNA]</scope>
    <source>
        <strain>cv. Columbia</strain>
    </source>
</reference>
<reference key="3">
    <citation type="journal article" date="2000" name="Nature">
        <title>Sequence and analysis of chromosome 1 of the plant Arabidopsis thaliana.</title>
        <authorList>
            <person name="Theologis A."/>
            <person name="Ecker J.R."/>
            <person name="Palm C.J."/>
            <person name="Federspiel N.A."/>
            <person name="Kaul S."/>
            <person name="White O."/>
            <person name="Alonso J."/>
            <person name="Altafi H."/>
            <person name="Araujo R."/>
            <person name="Bowman C.L."/>
            <person name="Brooks S.Y."/>
            <person name="Buehler E."/>
            <person name="Chan A."/>
            <person name="Chao Q."/>
            <person name="Chen H."/>
            <person name="Cheuk R.F."/>
            <person name="Chin C.W."/>
            <person name="Chung M.K."/>
            <person name="Conn L."/>
            <person name="Conway A.B."/>
            <person name="Conway A.R."/>
            <person name="Creasy T.H."/>
            <person name="Dewar K."/>
            <person name="Dunn P."/>
            <person name="Etgu P."/>
            <person name="Feldblyum T.V."/>
            <person name="Feng J.-D."/>
            <person name="Fong B."/>
            <person name="Fujii C.Y."/>
            <person name="Gill J.E."/>
            <person name="Goldsmith A.D."/>
            <person name="Haas B."/>
            <person name="Hansen N.F."/>
            <person name="Hughes B."/>
            <person name="Huizar L."/>
            <person name="Hunter J.L."/>
            <person name="Jenkins J."/>
            <person name="Johnson-Hopson C."/>
            <person name="Khan S."/>
            <person name="Khaykin E."/>
            <person name="Kim C.J."/>
            <person name="Koo H.L."/>
            <person name="Kremenetskaia I."/>
            <person name="Kurtz D.B."/>
            <person name="Kwan A."/>
            <person name="Lam B."/>
            <person name="Langin-Hooper S."/>
            <person name="Lee A."/>
            <person name="Lee J.M."/>
            <person name="Lenz C.A."/>
            <person name="Li J.H."/>
            <person name="Li Y.-P."/>
            <person name="Lin X."/>
            <person name="Liu S.X."/>
            <person name="Liu Z.A."/>
            <person name="Luros J.S."/>
            <person name="Maiti R."/>
            <person name="Marziali A."/>
            <person name="Militscher J."/>
            <person name="Miranda M."/>
            <person name="Nguyen M."/>
            <person name="Nierman W.C."/>
            <person name="Osborne B.I."/>
            <person name="Pai G."/>
            <person name="Peterson J."/>
            <person name="Pham P.K."/>
            <person name="Rizzo M."/>
            <person name="Rooney T."/>
            <person name="Rowley D."/>
            <person name="Sakano H."/>
            <person name="Salzberg S.L."/>
            <person name="Schwartz J.R."/>
            <person name="Shinn P."/>
            <person name="Southwick A.M."/>
            <person name="Sun H."/>
            <person name="Tallon L.J."/>
            <person name="Tambunga G."/>
            <person name="Toriumi M.J."/>
            <person name="Town C.D."/>
            <person name="Utterback T."/>
            <person name="Van Aken S."/>
            <person name="Vaysberg M."/>
            <person name="Vysotskaia V.S."/>
            <person name="Walker M."/>
            <person name="Wu D."/>
            <person name="Yu G."/>
            <person name="Fraser C.M."/>
            <person name="Venter J.C."/>
            <person name="Davis R.W."/>
        </authorList>
    </citation>
    <scope>NUCLEOTIDE SEQUENCE [LARGE SCALE GENOMIC DNA]</scope>
    <source>
        <strain>cv. Columbia</strain>
    </source>
</reference>
<reference key="4">
    <citation type="journal article" date="2017" name="Plant J.">
        <title>Araport11: a complete reannotation of the Arabidopsis thaliana reference genome.</title>
        <authorList>
            <person name="Cheng C.Y."/>
            <person name="Krishnakumar V."/>
            <person name="Chan A.P."/>
            <person name="Thibaud-Nissen F."/>
            <person name="Schobel S."/>
            <person name="Town C.D."/>
        </authorList>
    </citation>
    <scope>GENOME REANNOTATION</scope>
    <source>
        <strain>cv. Columbia</strain>
    </source>
</reference>
<reference key="5">
    <citation type="journal article" date="2003" name="Science">
        <title>Empirical analysis of transcriptional activity in the Arabidopsis genome.</title>
        <authorList>
            <person name="Yamada K."/>
            <person name="Lim J."/>
            <person name="Dale J.M."/>
            <person name="Chen H."/>
            <person name="Shinn P."/>
            <person name="Palm C.J."/>
            <person name="Southwick A.M."/>
            <person name="Wu H.C."/>
            <person name="Kim C.J."/>
            <person name="Nguyen M."/>
            <person name="Pham P.K."/>
            <person name="Cheuk R.F."/>
            <person name="Karlin-Newmann G."/>
            <person name="Liu S.X."/>
            <person name="Lam B."/>
            <person name="Sakano H."/>
            <person name="Wu T."/>
            <person name="Yu G."/>
            <person name="Miranda M."/>
            <person name="Quach H.L."/>
            <person name="Tripp M."/>
            <person name="Chang C.H."/>
            <person name="Lee J.M."/>
            <person name="Toriumi M.J."/>
            <person name="Chan M.M."/>
            <person name="Tang C.C."/>
            <person name="Onodera C.S."/>
            <person name="Deng J.M."/>
            <person name="Akiyama K."/>
            <person name="Ansari Y."/>
            <person name="Arakawa T."/>
            <person name="Banh J."/>
            <person name="Banno F."/>
            <person name="Bowser L."/>
            <person name="Brooks S.Y."/>
            <person name="Carninci P."/>
            <person name="Chao Q."/>
            <person name="Choy N."/>
            <person name="Enju A."/>
            <person name="Goldsmith A.D."/>
            <person name="Gurjal M."/>
            <person name="Hansen N.F."/>
            <person name="Hayashizaki Y."/>
            <person name="Johnson-Hopson C."/>
            <person name="Hsuan V.W."/>
            <person name="Iida K."/>
            <person name="Karnes M."/>
            <person name="Khan S."/>
            <person name="Koesema E."/>
            <person name="Ishida J."/>
            <person name="Jiang P.X."/>
            <person name="Jones T."/>
            <person name="Kawai J."/>
            <person name="Kamiya A."/>
            <person name="Meyers C."/>
            <person name="Nakajima M."/>
            <person name="Narusaka M."/>
            <person name="Seki M."/>
            <person name="Sakurai T."/>
            <person name="Satou M."/>
            <person name="Tamse R."/>
            <person name="Vaysberg M."/>
            <person name="Wallender E.K."/>
            <person name="Wong C."/>
            <person name="Yamamura Y."/>
            <person name="Yuan S."/>
            <person name="Shinozaki K."/>
            <person name="Davis R.W."/>
            <person name="Theologis A."/>
            <person name="Ecker J.R."/>
        </authorList>
    </citation>
    <scope>NUCLEOTIDE SEQUENCE [LARGE SCALE MRNA]</scope>
    <source>
        <strain>cv. Columbia</strain>
    </source>
</reference>
<reference key="6">
    <citation type="journal article" date="2000" name="Plant Physiol.">
        <title>ATMPK4, an Arabidopsis homolog of mitogen-activated protein kinase, is activated in vitro by AtMEK1 through threonine phosphorylation.</title>
        <authorList>
            <person name="Huang Y."/>
            <person name="Li H."/>
            <person name="Gupta R."/>
            <person name="Morris P.C."/>
            <person name="Luan S."/>
            <person name="Kieber J.J."/>
        </authorList>
    </citation>
    <scope>FUNCTION</scope>
</reference>
<reference key="7">
    <citation type="journal article" date="2003" name="Plant Physiol.">
        <title>Redox control of protein tyrosine phosphatases and mitogen-activated protein kinases in plants.</title>
        <authorList>
            <person name="Gupta R."/>
            <person name="Luan S."/>
        </authorList>
    </citation>
    <scope>FUNCTION</scope>
    <scope>ACTIVITY REGULATION</scope>
</reference>
<reference key="8">
    <citation type="journal article" date="2009" name="Plant Cell">
        <title>MAP kinase phosphatase1 and protein tyrosine phosphatase1 are repressors of salicylic acid synthesis and SNC1-mediated responses in Arabidopsis.</title>
        <authorList>
            <person name="Bartels S."/>
            <person name="Anderson J.C."/>
            <person name="Gonzalez Besteiro M.A."/>
            <person name="Carreri A."/>
            <person name="Hirt H."/>
            <person name="Buchala A."/>
            <person name="Metraux J.P."/>
            <person name="Peck S.C."/>
            <person name="Ulm R."/>
        </authorList>
    </citation>
    <scope>FUNCTION</scope>
    <scope>INTERACTION WITH MPK6</scope>
    <scope>SUBCELLULAR LOCATION</scope>
    <scope>DISRUPTION PHENOTYPE</scope>
</reference>
<reference key="9">
    <citation type="journal article" date="2016" name="J. Exp. Bot.">
        <title>Quantitative phosphoproteomics of protein kinase SnRK1 regulated protein phosphorylation in Arabidopsis under submergence.</title>
        <authorList>
            <person name="Cho H.Y."/>
            <person name="Wen T.N."/>
            <person name="Wang Y.T."/>
            <person name="Shih M.C."/>
        </authorList>
    </citation>
    <scope>INTERACTION WITH KIN10 AND MPK6</scope>
    <scope>MUTAGENESIS OF SER-7 AND SER-8</scope>
    <scope>PHOSPHORYLATION</scope>
</reference>
<evidence type="ECO:0000250" key="1"/>
<evidence type="ECO:0000255" key="2">
    <source>
        <dbReference type="PROSITE-ProRule" id="PRU00160"/>
    </source>
</evidence>
<evidence type="ECO:0000255" key="3">
    <source>
        <dbReference type="PROSITE-ProRule" id="PRU10044"/>
    </source>
</evidence>
<evidence type="ECO:0000269" key="4">
    <source>
    </source>
</evidence>
<evidence type="ECO:0000269" key="5">
    <source>
    </source>
</evidence>
<evidence type="ECO:0000269" key="6">
    <source>
    </source>
</evidence>
<evidence type="ECO:0000269" key="7">
    <source>
    </source>
</evidence>
<evidence type="ECO:0000269" key="8">
    <source>
    </source>
</evidence>
<evidence type="ECO:0000305" key="9"/>
<evidence type="ECO:0007829" key="10">
    <source>
        <dbReference type="PDB" id="6KRW"/>
    </source>
</evidence>